<reference key="1">
    <citation type="journal article" date="2005" name="Infect. Immun.">
        <title>Whole-genome analyses of speciation events in pathogenic Brucellae.</title>
        <authorList>
            <person name="Chain P.S."/>
            <person name="Comerci D.J."/>
            <person name="Tolmasky M.E."/>
            <person name="Larimer F.W."/>
            <person name="Malfatti S.A."/>
            <person name="Vergez L.M."/>
            <person name="Aguero F."/>
            <person name="Land M.L."/>
            <person name="Ugalde R.A."/>
            <person name="Garcia E."/>
        </authorList>
    </citation>
    <scope>NUCLEOTIDE SEQUENCE [LARGE SCALE GENOMIC DNA]</scope>
    <source>
        <strain>2308</strain>
    </source>
</reference>
<gene>
    <name evidence="1" type="primary">glsA</name>
    <name type="ordered locus">BAB2_0863</name>
</gene>
<organism>
    <name type="scientific">Brucella abortus (strain 2308)</name>
    <dbReference type="NCBI Taxonomy" id="359391"/>
    <lineage>
        <taxon>Bacteria</taxon>
        <taxon>Pseudomonadati</taxon>
        <taxon>Pseudomonadota</taxon>
        <taxon>Alphaproteobacteria</taxon>
        <taxon>Hyphomicrobiales</taxon>
        <taxon>Brucellaceae</taxon>
        <taxon>Brucella/Ochrobactrum group</taxon>
        <taxon>Brucella</taxon>
    </lineage>
</organism>
<name>GLSA_BRUA2</name>
<comment type="catalytic activity">
    <reaction evidence="1">
        <text>L-glutamine + H2O = L-glutamate + NH4(+)</text>
        <dbReference type="Rhea" id="RHEA:15889"/>
        <dbReference type="ChEBI" id="CHEBI:15377"/>
        <dbReference type="ChEBI" id="CHEBI:28938"/>
        <dbReference type="ChEBI" id="CHEBI:29985"/>
        <dbReference type="ChEBI" id="CHEBI:58359"/>
        <dbReference type="EC" id="3.5.1.2"/>
    </reaction>
</comment>
<comment type="subunit">
    <text evidence="1">Homotetramer.</text>
</comment>
<comment type="similarity">
    <text evidence="1">Belongs to the glutaminase family.</text>
</comment>
<protein>
    <recommendedName>
        <fullName evidence="1">Glutaminase</fullName>
        <ecNumber evidence="1">3.5.1.2</ecNumber>
    </recommendedName>
</protein>
<feature type="chain" id="PRO_1000048327" description="Glutaminase">
    <location>
        <begin position="1"/>
        <end position="317"/>
    </location>
</feature>
<feature type="binding site" evidence="1">
    <location>
        <position position="67"/>
    </location>
    <ligand>
        <name>substrate</name>
    </ligand>
</feature>
<feature type="binding site" evidence="1">
    <location>
        <position position="118"/>
    </location>
    <ligand>
        <name>substrate</name>
    </ligand>
</feature>
<feature type="binding site" evidence="1">
    <location>
        <position position="162"/>
    </location>
    <ligand>
        <name>substrate</name>
    </ligand>
</feature>
<feature type="binding site" evidence="1">
    <location>
        <position position="169"/>
    </location>
    <ligand>
        <name>substrate</name>
    </ligand>
</feature>
<feature type="binding site" evidence="1">
    <location>
        <position position="193"/>
    </location>
    <ligand>
        <name>substrate</name>
    </ligand>
</feature>
<feature type="binding site" evidence="1">
    <location>
        <position position="245"/>
    </location>
    <ligand>
        <name>substrate</name>
    </ligand>
</feature>
<feature type="binding site" evidence="1">
    <location>
        <position position="263"/>
    </location>
    <ligand>
        <name>substrate</name>
    </ligand>
</feature>
<evidence type="ECO:0000255" key="1">
    <source>
        <dbReference type="HAMAP-Rule" id="MF_00313"/>
    </source>
</evidence>
<proteinExistence type="inferred from homology"/>
<dbReference type="EC" id="3.5.1.2" evidence="1"/>
<dbReference type="EMBL" id="AM040265">
    <property type="protein sequence ID" value="CAJ13029.1"/>
    <property type="molecule type" value="Genomic_DNA"/>
</dbReference>
<dbReference type="RefSeq" id="WP_002967336.1">
    <property type="nucleotide sequence ID" value="NZ_KN046823.1"/>
</dbReference>
<dbReference type="SMR" id="Q2YK17"/>
<dbReference type="STRING" id="359391.BAB2_0863"/>
<dbReference type="DNASU" id="3827366"/>
<dbReference type="GeneID" id="93015291"/>
<dbReference type="KEGG" id="bmf:BAB2_0863"/>
<dbReference type="PATRIC" id="fig|359391.11.peg.551"/>
<dbReference type="HOGENOM" id="CLU_027932_1_0_5"/>
<dbReference type="PhylomeDB" id="Q2YK17"/>
<dbReference type="Proteomes" id="UP000002719">
    <property type="component" value="Chromosome II"/>
</dbReference>
<dbReference type="GO" id="GO:0004359">
    <property type="term" value="F:glutaminase activity"/>
    <property type="evidence" value="ECO:0007669"/>
    <property type="project" value="UniProtKB-UniRule"/>
</dbReference>
<dbReference type="GO" id="GO:0006537">
    <property type="term" value="P:glutamate biosynthetic process"/>
    <property type="evidence" value="ECO:0007669"/>
    <property type="project" value="TreeGrafter"/>
</dbReference>
<dbReference type="GO" id="GO:0006543">
    <property type="term" value="P:glutamine catabolic process"/>
    <property type="evidence" value="ECO:0007669"/>
    <property type="project" value="TreeGrafter"/>
</dbReference>
<dbReference type="Gene3D" id="3.40.710.10">
    <property type="entry name" value="DD-peptidase/beta-lactamase superfamily"/>
    <property type="match status" value="1"/>
</dbReference>
<dbReference type="HAMAP" id="MF_00313">
    <property type="entry name" value="Glutaminase"/>
    <property type="match status" value="1"/>
</dbReference>
<dbReference type="InterPro" id="IPR012338">
    <property type="entry name" value="Beta-lactam/transpept-like"/>
</dbReference>
<dbReference type="InterPro" id="IPR015868">
    <property type="entry name" value="Glutaminase"/>
</dbReference>
<dbReference type="NCBIfam" id="TIGR03814">
    <property type="entry name" value="Gln_ase"/>
    <property type="match status" value="1"/>
</dbReference>
<dbReference type="NCBIfam" id="NF009020">
    <property type="entry name" value="PRK12356.1"/>
    <property type="match status" value="1"/>
</dbReference>
<dbReference type="PANTHER" id="PTHR12544">
    <property type="entry name" value="GLUTAMINASE"/>
    <property type="match status" value="1"/>
</dbReference>
<dbReference type="PANTHER" id="PTHR12544:SF48">
    <property type="entry name" value="GLUTAMINASE 1"/>
    <property type="match status" value="1"/>
</dbReference>
<dbReference type="Pfam" id="PF04960">
    <property type="entry name" value="Glutaminase"/>
    <property type="match status" value="1"/>
</dbReference>
<dbReference type="SUPFAM" id="SSF56601">
    <property type="entry name" value="beta-lactamase/transpeptidase-like"/>
    <property type="match status" value="1"/>
</dbReference>
<accession>Q2YK17</accession>
<keyword id="KW-0378">Hydrolase</keyword>
<keyword id="KW-1185">Reference proteome</keyword>
<sequence length="317" mass="32463">MSSSSDAIKAALEKGRAAGLSATGGKNADYIPFLASVPSDLFGLAVVTADGQTFKTGDADIAFAIESISKVFTLALVMEEIGPDSVREKVGADPTGLPFNSVIALELHNGKSLSPLVNAGAIATASLVPGDTADARWNNILECQCGFAGRRLKLSNEVNQSEQTTNFHNRAIAWLLYSAGTCYSDPMEAVDIYTRQCSTLVTATDLATMGATLAAGGVNPISGKRMVSAGNVAPILVEMTMEGLYTALGDWAYTVGLPGKSGVGGGIMAVVPGELAIAAFSPPLDPAGNSVKAMAAVAAVADSLGHNLYTTRGKVSS</sequence>